<dbReference type="EMBL" id="AAFI02000019">
    <property type="protein sequence ID" value="EAL68932.1"/>
    <property type="molecule type" value="Genomic_DNA"/>
</dbReference>
<dbReference type="RefSeq" id="XP_642954.1">
    <property type="nucleotide sequence ID" value="XM_637862.1"/>
</dbReference>
<dbReference type="SMR" id="Q76NW7"/>
<dbReference type="FunCoup" id="Q76NW7">
    <property type="interactions" value="321"/>
</dbReference>
<dbReference type="STRING" id="44689.Q76NW7"/>
<dbReference type="GlyGen" id="Q76NW7">
    <property type="glycosylation" value="1 site"/>
</dbReference>
<dbReference type="PaxDb" id="44689-DDB0266827"/>
<dbReference type="EnsemblProtists" id="EAL68932">
    <property type="protein sequence ID" value="EAL68932"/>
    <property type="gene ID" value="DDB_G0276861"/>
</dbReference>
<dbReference type="GeneID" id="8620823"/>
<dbReference type="KEGG" id="ddi:DDB_G0276861"/>
<dbReference type="dictyBase" id="DDB_G0276861"/>
<dbReference type="VEuPathDB" id="AmoebaDB:DDB_G0276861"/>
<dbReference type="eggNOG" id="KOG2973">
    <property type="taxonomic scope" value="Eukaryota"/>
</dbReference>
<dbReference type="HOGENOM" id="CLU_037769_3_0_1"/>
<dbReference type="InParanoid" id="Q76NW7"/>
<dbReference type="OMA" id="MCILLTN"/>
<dbReference type="PhylomeDB" id="Q76NW7"/>
<dbReference type="PRO" id="PR:Q76NW7"/>
<dbReference type="Proteomes" id="UP000002195">
    <property type="component" value="Chromosome 2"/>
</dbReference>
<dbReference type="Gene3D" id="1.25.10.10">
    <property type="entry name" value="Leucine-rich Repeat Variant"/>
    <property type="match status" value="1"/>
</dbReference>
<dbReference type="InterPro" id="IPR011989">
    <property type="entry name" value="ARM-like"/>
</dbReference>
<dbReference type="InterPro" id="IPR016024">
    <property type="entry name" value="ARM-type_fold"/>
</dbReference>
<dbReference type="InterPro" id="IPR039717">
    <property type="entry name" value="Hgh1"/>
</dbReference>
<dbReference type="InterPro" id="IPR007206">
    <property type="entry name" value="Protein_HGH1_C"/>
</dbReference>
<dbReference type="InterPro" id="IPR007205">
    <property type="entry name" value="Protein_HGH1_N"/>
</dbReference>
<dbReference type="PANTHER" id="PTHR13387">
    <property type="entry name" value="PROTEIN HGH1 HOMOLOG"/>
    <property type="match status" value="1"/>
</dbReference>
<dbReference type="PANTHER" id="PTHR13387:SF9">
    <property type="entry name" value="PROTEIN HGH1 HOMOLOG"/>
    <property type="match status" value="1"/>
</dbReference>
<dbReference type="Pfam" id="PF04063">
    <property type="entry name" value="DUF383"/>
    <property type="match status" value="1"/>
</dbReference>
<dbReference type="Pfam" id="PF04064">
    <property type="entry name" value="DUF384"/>
    <property type="match status" value="1"/>
</dbReference>
<dbReference type="SUPFAM" id="SSF48371">
    <property type="entry name" value="ARM repeat"/>
    <property type="match status" value="1"/>
</dbReference>
<keyword id="KW-1185">Reference proteome</keyword>
<protein>
    <recommendedName>
        <fullName>Protein HGH1 homolog</fullName>
    </recommendedName>
</protein>
<comment type="similarity">
    <text evidence="2">Belongs to the HGH1 family.</text>
</comment>
<reference key="1">
    <citation type="journal article" date="2002" name="Nature">
        <title>Sequence and analysis of chromosome 2 of Dictyostelium discoideum.</title>
        <authorList>
            <person name="Gloeckner G."/>
            <person name="Eichinger L."/>
            <person name="Szafranski K."/>
            <person name="Pachebat J.A."/>
            <person name="Bankier A.T."/>
            <person name="Dear P.H."/>
            <person name="Lehmann R."/>
            <person name="Baumgart C."/>
            <person name="Parra G."/>
            <person name="Abril J.F."/>
            <person name="Guigo R."/>
            <person name="Kumpf K."/>
            <person name="Tunggal B."/>
            <person name="Cox E.C."/>
            <person name="Quail M.A."/>
            <person name="Platzer M."/>
            <person name="Rosenthal A."/>
            <person name="Noegel A.A."/>
        </authorList>
    </citation>
    <scope>NUCLEOTIDE SEQUENCE [LARGE SCALE GENOMIC DNA]</scope>
    <source>
        <strain>AX4</strain>
    </source>
</reference>
<reference key="2">
    <citation type="journal article" date="2005" name="Nature">
        <title>The genome of the social amoeba Dictyostelium discoideum.</title>
        <authorList>
            <person name="Eichinger L."/>
            <person name="Pachebat J.A."/>
            <person name="Gloeckner G."/>
            <person name="Rajandream M.A."/>
            <person name="Sucgang R."/>
            <person name="Berriman M."/>
            <person name="Song J."/>
            <person name="Olsen R."/>
            <person name="Szafranski K."/>
            <person name="Xu Q."/>
            <person name="Tunggal B."/>
            <person name="Kummerfeld S."/>
            <person name="Madera M."/>
            <person name="Konfortov B.A."/>
            <person name="Rivero F."/>
            <person name="Bankier A.T."/>
            <person name="Lehmann R."/>
            <person name="Hamlin N."/>
            <person name="Davies R."/>
            <person name="Gaudet P."/>
            <person name="Fey P."/>
            <person name="Pilcher K."/>
            <person name="Chen G."/>
            <person name="Saunders D."/>
            <person name="Sodergren E.J."/>
            <person name="Davis P."/>
            <person name="Kerhornou A."/>
            <person name="Nie X."/>
            <person name="Hall N."/>
            <person name="Anjard C."/>
            <person name="Hemphill L."/>
            <person name="Bason N."/>
            <person name="Farbrother P."/>
            <person name="Desany B."/>
            <person name="Just E."/>
            <person name="Morio T."/>
            <person name="Rost R."/>
            <person name="Churcher C.M."/>
            <person name="Cooper J."/>
            <person name="Haydock S."/>
            <person name="van Driessche N."/>
            <person name="Cronin A."/>
            <person name="Goodhead I."/>
            <person name="Muzny D.M."/>
            <person name="Mourier T."/>
            <person name="Pain A."/>
            <person name="Lu M."/>
            <person name="Harper D."/>
            <person name="Lindsay R."/>
            <person name="Hauser H."/>
            <person name="James K.D."/>
            <person name="Quiles M."/>
            <person name="Madan Babu M."/>
            <person name="Saito T."/>
            <person name="Buchrieser C."/>
            <person name="Wardroper A."/>
            <person name="Felder M."/>
            <person name="Thangavelu M."/>
            <person name="Johnson D."/>
            <person name="Knights A."/>
            <person name="Loulseged H."/>
            <person name="Mungall K.L."/>
            <person name="Oliver K."/>
            <person name="Price C."/>
            <person name="Quail M.A."/>
            <person name="Urushihara H."/>
            <person name="Hernandez J."/>
            <person name="Rabbinowitsch E."/>
            <person name="Steffen D."/>
            <person name="Sanders M."/>
            <person name="Ma J."/>
            <person name="Kohara Y."/>
            <person name="Sharp S."/>
            <person name="Simmonds M.N."/>
            <person name="Spiegler S."/>
            <person name="Tivey A."/>
            <person name="Sugano S."/>
            <person name="White B."/>
            <person name="Walker D."/>
            <person name="Woodward J.R."/>
            <person name="Winckler T."/>
            <person name="Tanaka Y."/>
            <person name="Shaulsky G."/>
            <person name="Schleicher M."/>
            <person name="Weinstock G.M."/>
            <person name="Rosenthal A."/>
            <person name="Cox E.C."/>
            <person name="Chisholm R.L."/>
            <person name="Gibbs R.A."/>
            <person name="Loomis W.F."/>
            <person name="Platzer M."/>
            <person name="Kay R.R."/>
            <person name="Williams J.G."/>
            <person name="Dear P.H."/>
            <person name="Noegel A.A."/>
            <person name="Barrell B.G."/>
            <person name="Kuspa A."/>
        </authorList>
    </citation>
    <scope>NUCLEOTIDE SEQUENCE [LARGE SCALE GENOMIC DNA]</scope>
    <source>
        <strain>AX4</strain>
    </source>
</reference>
<proteinExistence type="inferred from homology"/>
<sequence length="355" mass="40941">MDQLPELVPFLLEPKSEIKLLALQHLLGVSDNQEARDILKSTQIINNCIKLITDSNHVVVRHALTILINLCQDTDMLNDIVKKNIVPRLVDGTTDTKNKMSEIFAMLLSNVTHTKEGCLSLMQCGKELEAFFIMKLVQVLTMDSNQEDYFKSTKNNWIVNIILNVTQIQEGRKIVLDKENQIFKEILPLVRHENVIKRRGILGIIRNCCYSEQHHDYLISPEVDILTKLCLPIRGNDKLDDDDLVGLHIDLHNSSLPIGNERDQDRECRKMVVESLIFLTGTKKGRVSMRTAKIYPILRNLFNFETEEELRDNVEKVVELIIRDEEGDPTPEEIEQMNKKQKLEDEDAQFETDEI</sequence>
<name>HGH1_DICDI</name>
<evidence type="ECO:0000256" key="1">
    <source>
        <dbReference type="SAM" id="MobiDB-lite"/>
    </source>
</evidence>
<evidence type="ECO:0000305" key="2"/>
<feature type="chain" id="PRO_0000331585" description="Protein HGH1 homolog">
    <location>
        <begin position="1"/>
        <end position="355"/>
    </location>
</feature>
<feature type="region of interest" description="Disordered" evidence="1">
    <location>
        <begin position="324"/>
        <end position="355"/>
    </location>
</feature>
<feature type="compositionally biased region" description="Acidic residues" evidence="1">
    <location>
        <begin position="325"/>
        <end position="335"/>
    </location>
</feature>
<feature type="compositionally biased region" description="Acidic residues" evidence="1">
    <location>
        <begin position="344"/>
        <end position="355"/>
    </location>
</feature>
<organism>
    <name type="scientific">Dictyostelium discoideum</name>
    <name type="common">Social amoeba</name>
    <dbReference type="NCBI Taxonomy" id="44689"/>
    <lineage>
        <taxon>Eukaryota</taxon>
        <taxon>Amoebozoa</taxon>
        <taxon>Evosea</taxon>
        <taxon>Eumycetozoa</taxon>
        <taxon>Dictyostelia</taxon>
        <taxon>Dictyosteliales</taxon>
        <taxon>Dictyosteliaceae</taxon>
        <taxon>Dictyostelium</taxon>
    </lineage>
</organism>
<accession>Q76NW7</accession>
<accession>Q550H8</accession>
<gene>
    <name type="ORF">DDB_G0276861</name>
</gene>